<accession>Q0PC41</accession>
<name>OBG_CAMJE</name>
<evidence type="ECO:0000255" key="1">
    <source>
        <dbReference type="HAMAP-Rule" id="MF_01454"/>
    </source>
</evidence>
<evidence type="ECO:0000255" key="2">
    <source>
        <dbReference type="PROSITE-ProRule" id="PRU01231"/>
    </source>
</evidence>
<dbReference type="EC" id="3.6.5.-" evidence="1"/>
<dbReference type="EMBL" id="AL111168">
    <property type="protein sequence ID" value="CAL34267.1"/>
    <property type="molecule type" value="Genomic_DNA"/>
</dbReference>
<dbReference type="PIR" id="H81425">
    <property type="entry name" value="H81425"/>
</dbReference>
<dbReference type="SMR" id="Q0PC41"/>
<dbReference type="STRING" id="192222.Cj0096"/>
<dbReference type="PaxDb" id="192222-Cj0096"/>
<dbReference type="EnsemblBacteria" id="CAL34267">
    <property type="protein sequence ID" value="CAL34267"/>
    <property type="gene ID" value="Cj0096"/>
</dbReference>
<dbReference type="KEGG" id="cje:Cj0096"/>
<dbReference type="PATRIC" id="fig|192222.6.peg.94"/>
<dbReference type="eggNOG" id="COG0536">
    <property type="taxonomic scope" value="Bacteria"/>
</dbReference>
<dbReference type="HOGENOM" id="CLU_011747_2_0_7"/>
<dbReference type="OrthoDB" id="9807318at2"/>
<dbReference type="Proteomes" id="UP000000799">
    <property type="component" value="Chromosome"/>
</dbReference>
<dbReference type="GO" id="GO:0005737">
    <property type="term" value="C:cytoplasm"/>
    <property type="evidence" value="ECO:0007669"/>
    <property type="project" value="UniProtKB-SubCell"/>
</dbReference>
<dbReference type="GO" id="GO:0005525">
    <property type="term" value="F:GTP binding"/>
    <property type="evidence" value="ECO:0007669"/>
    <property type="project" value="UniProtKB-UniRule"/>
</dbReference>
<dbReference type="GO" id="GO:0003924">
    <property type="term" value="F:GTPase activity"/>
    <property type="evidence" value="ECO:0007669"/>
    <property type="project" value="UniProtKB-UniRule"/>
</dbReference>
<dbReference type="GO" id="GO:0000287">
    <property type="term" value="F:magnesium ion binding"/>
    <property type="evidence" value="ECO:0007669"/>
    <property type="project" value="InterPro"/>
</dbReference>
<dbReference type="GO" id="GO:0042254">
    <property type="term" value="P:ribosome biogenesis"/>
    <property type="evidence" value="ECO:0007669"/>
    <property type="project" value="UniProtKB-UniRule"/>
</dbReference>
<dbReference type="CDD" id="cd01898">
    <property type="entry name" value="Obg"/>
    <property type="match status" value="1"/>
</dbReference>
<dbReference type="FunFam" id="2.70.210.12:FF:000001">
    <property type="entry name" value="GTPase Obg"/>
    <property type="match status" value="1"/>
</dbReference>
<dbReference type="Gene3D" id="2.70.210.12">
    <property type="entry name" value="GTP1/OBG domain"/>
    <property type="match status" value="1"/>
</dbReference>
<dbReference type="Gene3D" id="3.40.50.300">
    <property type="entry name" value="P-loop containing nucleotide triphosphate hydrolases"/>
    <property type="match status" value="1"/>
</dbReference>
<dbReference type="HAMAP" id="MF_01454">
    <property type="entry name" value="GTPase_Obg"/>
    <property type="match status" value="1"/>
</dbReference>
<dbReference type="InterPro" id="IPR031167">
    <property type="entry name" value="G_OBG"/>
</dbReference>
<dbReference type="InterPro" id="IPR006073">
    <property type="entry name" value="GTP-bd"/>
</dbReference>
<dbReference type="InterPro" id="IPR014100">
    <property type="entry name" value="GTP-bd_Obg/CgtA"/>
</dbReference>
<dbReference type="InterPro" id="IPR006074">
    <property type="entry name" value="GTP1-OBG_CS"/>
</dbReference>
<dbReference type="InterPro" id="IPR006169">
    <property type="entry name" value="GTP1_OBG_dom"/>
</dbReference>
<dbReference type="InterPro" id="IPR036726">
    <property type="entry name" value="GTP1_OBG_dom_sf"/>
</dbReference>
<dbReference type="InterPro" id="IPR045086">
    <property type="entry name" value="OBG_GTPase"/>
</dbReference>
<dbReference type="InterPro" id="IPR027417">
    <property type="entry name" value="P-loop_NTPase"/>
</dbReference>
<dbReference type="NCBIfam" id="TIGR02729">
    <property type="entry name" value="Obg_CgtA"/>
    <property type="match status" value="1"/>
</dbReference>
<dbReference type="NCBIfam" id="NF008955">
    <property type="entry name" value="PRK12297.1"/>
    <property type="match status" value="1"/>
</dbReference>
<dbReference type="NCBIfam" id="NF008956">
    <property type="entry name" value="PRK12299.1"/>
    <property type="match status" value="1"/>
</dbReference>
<dbReference type="PANTHER" id="PTHR11702">
    <property type="entry name" value="DEVELOPMENTALLY REGULATED GTP-BINDING PROTEIN-RELATED"/>
    <property type="match status" value="1"/>
</dbReference>
<dbReference type="PANTHER" id="PTHR11702:SF31">
    <property type="entry name" value="MITOCHONDRIAL RIBOSOME-ASSOCIATED GTPASE 2"/>
    <property type="match status" value="1"/>
</dbReference>
<dbReference type="Pfam" id="PF01018">
    <property type="entry name" value="GTP1_OBG"/>
    <property type="match status" value="1"/>
</dbReference>
<dbReference type="Pfam" id="PF01926">
    <property type="entry name" value="MMR_HSR1"/>
    <property type="match status" value="1"/>
</dbReference>
<dbReference type="PIRSF" id="PIRSF002401">
    <property type="entry name" value="GTP_bd_Obg/CgtA"/>
    <property type="match status" value="1"/>
</dbReference>
<dbReference type="PRINTS" id="PR00326">
    <property type="entry name" value="GTP1OBG"/>
</dbReference>
<dbReference type="SUPFAM" id="SSF82051">
    <property type="entry name" value="Obg GTP-binding protein N-terminal domain"/>
    <property type="match status" value="1"/>
</dbReference>
<dbReference type="SUPFAM" id="SSF52540">
    <property type="entry name" value="P-loop containing nucleoside triphosphate hydrolases"/>
    <property type="match status" value="1"/>
</dbReference>
<dbReference type="PROSITE" id="PS51710">
    <property type="entry name" value="G_OBG"/>
    <property type="match status" value="1"/>
</dbReference>
<dbReference type="PROSITE" id="PS00905">
    <property type="entry name" value="GTP1_OBG"/>
    <property type="match status" value="1"/>
</dbReference>
<dbReference type="PROSITE" id="PS51883">
    <property type="entry name" value="OBG"/>
    <property type="match status" value="1"/>
</dbReference>
<keyword id="KW-0963">Cytoplasm</keyword>
<keyword id="KW-0342">GTP-binding</keyword>
<keyword id="KW-0378">Hydrolase</keyword>
<keyword id="KW-0460">Magnesium</keyword>
<keyword id="KW-0479">Metal-binding</keyword>
<keyword id="KW-0547">Nucleotide-binding</keyword>
<keyword id="KW-1185">Reference proteome</keyword>
<feature type="chain" id="PRO_0000385802" description="GTPase Obg">
    <location>
        <begin position="1"/>
        <end position="350"/>
    </location>
</feature>
<feature type="domain" description="Obg" evidence="2">
    <location>
        <begin position="1"/>
        <end position="158"/>
    </location>
</feature>
<feature type="domain" description="OBG-type G" evidence="1">
    <location>
        <begin position="159"/>
        <end position="339"/>
    </location>
</feature>
<feature type="binding site" evidence="1">
    <location>
        <begin position="165"/>
        <end position="172"/>
    </location>
    <ligand>
        <name>GTP</name>
        <dbReference type="ChEBI" id="CHEBI:37565"/>
    </ligand>
</feature>
<feature type="binding site" evidence="1">
    <location>
        <position position="172"/>
    </location>
    <ligand>
        <name>Mg(2+)</name>
        <dbReference type="ChEBI" id="CHEBI:18420"/>
    </ligand>
</feature>
<feature type="binding site" evidence="1">
    <location>
        <begin position="190"/>
        <end position="194"/>
    </location>
    <ligand>
        <name>GTP</name>
        <dbReference type="ChEBI" id="CHEBI:37565"/>
    </ligand>
</feature>
<feature type="binding site" evidence="1">
    <location>
        <position position="192"/>
    </location>
    <ligand>
        <name>Mg(2+)</name>
        <dbReference type="ChEBI" id="CHEBI:18420"/>
    </ligand>
</feature>
<feature type="binding site" evidence="1">
    <location>
        <begin position="212"/>
        <end position="215"/>
    </location>
    <ligand>
        <name>GTP</name>
        <dbReference type="ChEBI" id="CHEBI:37565"/>
    </ligand>
</feature>
<feature type="binding site" evidence="1">
    <location>
        <begin position="280"/>
        <end position="283"/>
    </location>
    <ligand>
        <name>GTP</name>
        <dbReference type="ChEBI" id="CHEBI:37565"/>
    </ligand>
</feature>
<feature type="binding site" evidence="1">
    <location>
        <begin position="320"/>
        <end position="322"/>
    </location>
    <ligand>
        <name>GTP</name>
        <dbReference type="ChEBI" id="CHEBI:37565"/>
    </ligand>
</feature>
<gene>
    <name evidence="1" type="primary">obg</name>
    <name type="ordered locus">Cj0096</name>
</gene>
<reference key="1">
    <citation type="journal article" date="2000" name="Nature">
        <title>The genome sequence of the food-borne pathogen Campylobacter jejuni reveals hypervariable sequences.</title>
        <authorList>
            <person name="Parkhill J."/>
            <person name="Wren B.W."/>
            <person name="Mungall K.L."/>
            <person name="Ketley J.M."/>
            <person name="Churcher C.M."/>
            <person name="Basham D."/>
            <person name="Chillingworth T."/>
            <person name="Davies R.M."/>
            <person name="Feltwell T."/>
            <person name="Holroyd S."/>
            <person name="Jagels K."/>
            <person name="Karlyshev A.V."/>
            <person name="Moule S."/>
            <person name="Pallen M.J."/>
            <person name="Penn C.W."/>
            <person name="Quail M.A."/>
            <person name="Rajandream M.A."/>
            <person name="Rutherford K.M."/>
            <person name="van Vliet A.H.M."/>
            <person name="Whitehead S."/>
            <person name="Barrell B.G."/>
        </authorList>
    </citation>
    <scope>NUCLEOTIDE SEQUENCE [LARGE SCALE GENOMIC DNA]</scope>
    <source>
        <strain>ATCC 700819 / NCTC 11168</strain>
    </source>
</reference>
<sequence length="350" mass="38384">MFIDSVKITLASGDGGKGAVSFRREKHVPLGGPDGGDGGNGGDIIFVCDNNTHTLVNFKGKRELRAQNGAGGMGRNKNGKKGENLELIVPEGTQVIDAQTNEILLDLTKEGQRELFLKGGKGGLGNTHFKHATNQRPDYAQPGIKGESRLVRLELKLIADVGLVGFPNVGKSTLISVVSNAKPEIANYEFTTLTPKLGLVDVNEYNSFVMADIPGIIEGASGGKGLGLAFLKHIERTSFLLFVLDPMRQMPLKEQFIVLRKELEKFSNELFGRKFGIMISKSDSVRLGEEFAEQIALNINELDNYLKEINNPQSFLIKVSSLEKTGLKELKFMLLEEIKTLRNNKKNLTI</sequence>
<organism>
    <name type="scientific">Campylobacter jejuni subsp. jejuni serotype O:2 (strain ATCC 700819 / NCTC 11168)</name>
    <dbReference type="NCBI Taxonomy" id="192222"/>
    <lineage>
        <taxon>Bacteria</taxon>
        <taxon>Pseudomonadati</taxon>
        <taxon>Campylobacterota</taxon>
        <taxon>Epsilonproteobacteria</taxon>
        <taxon>Campylobacterales</taxon>
        <taxon>Campylobacteraceae</taxon>
        <taxon>Campylobacter</taxon>
    </lineage>
</organism>
<comment type="function">
    <text evidence="1">An essential GTPase which binds GTP, GDP and possibly (p)ppGpp with moderate affinity, with high nucleotide exchange rates and a fairly low GTP hydrolysis rate. Plays a role in control of the cell cycle, stress response, ribosome biogenesis and in those bacteria that undergo differentiation, in morphogenesis control.</text>
</comment>
<comment type="cofactor">
    <cofactor evidence="1">
        <name>Mg(2+)</name>
        <dbReference type="ChEBI" id="CHEBI:18420"/>
    </cofactor>
</comment>
<comment type="subunit">
    <text evidence="1">Monomer.</text>
</comment>
<comment type="subcellular location">
    <subcellularLocation>
        <location evidence="1">Cytoplasm</location>
    </subcellularLocation>
</comment>
<comment type="similarity">
    <text evidence="1">Belongs to the TRAFAC class OBG-HflX-like GTPase superfamily. OBG GTPase family.</text>
</comment>
<protein>
    <recommendedName>
        <fullName evidence="1">GTPase Obg</fullName>
        <ecNumber evidence="1">3.6.5.-</ecNumber>
    </recommendedName>
    <alternativeName>
        <fullName evidence="1">GTP-binding protein Obg</fullName>
    </alternativeName>
</protein>
<proteinExistence type="inferred from homology"/>